<sequence length="183" mass="20504">MREYKVVVLGSGGVGKSALTVQFVTGSFIEKYDPTIEDFYRKEIEVDSSPSVLEILDTAGTEQFASMRDLYIKNGQGFILVYSLVNQQSFQDIKPMRDQIIRVKRYERVPMILVGNKVDLEGEREVSYGEGKALAEEWSCPFMETSAKNKASVDELFAEIVRQMNYAAQPNGDEGCCSACVIL</sequence>
<name>RAP2A_PIG</name>
<proteinExistence type="evidence at transcript level"/>
<protein>
    <recommendedName>
        <fullName>Ras-related protein Rap-2a</fullName>
        <ecNumber evidence="2">3.6.5.2</ecNumber>
    </recommendedName>
</protein>
<reference key="1">
    <citation type="submission" date="2006-08" db="EMBL/GenBank/DDBJ databases">
        <authorList>
            <person name="Liu G.Y."/>
        </authorList>
    </citation>
    <scope>NUCLEOTIDE SEQUENCE [LARGE SCALE MRNA]</scope>
</reference>
<feature type="chain" id="PRO_0000281338" description="Ras-related protein Rap-2a">
    <location>
        <begin position="1"/>
        <end position="180"/>
    </location>
</feature>
<feature type="propeptide" id="PRO_0000281339" description="Removed in mature form" evidence="3">
    <location>
        <begin position="181"/>
        <end position="183"/>
    </location>
</feature>
<feature type="short sequence motif" description="Effector region">
    <location>
        <begin position="32"/>
        <end position="40"/>
    </location>
</feature>
<feature type="binding site" evidence="1">
    <location>
        <begin position="10"/>
        <end position="17"/>
    </location>
    <ligand>
        <name>GTP</name>
        <dbReference type="ChEBI" id="CHEBI:37565"/>
    </ligand>
</feature>
<feature type="binding site" evidence="1">
    <location>
        <begin position="57"/>
        <end position="61"/>
    </location>
    <ligand>
        <name>GTP</name>
        <dbReference type="ChEBI" id="CHEBI:37565"/>
    </ligand>
</feature>
<feature type="binding site" evidence="1">
    <location>
        <begin position="116"/>
        <end position="119"/>
    </location>
    <ligand>
        <name>GTP</name>
        <dbReference type="ChEBI" id="CHEBI:37565"/>
    </ligand>
</feature>
<feature type="modified residue" description="Cysteine methyl ester" evidence="3">
    <location>
        <position position="180"/>
    </location>
</feature>
<feature type="lipid moiety-binding region" description="S-palmitoyl cysteine" evidence="3">
    <location>
        <position position="176"/>
    </location>
</feature>
<feature type="lipid moiety-binding region" description="S-palmitoyl cysteine" evidence="3">
    <location>
        <position position="177"/>
    </location>
</feature>
<feature type="lipid moiety-binding region" description="S-farnesyl cysteine" evidence="3">
    <location>
        <position position="180"/>
    </location>
</feature>
<organism>
    <name type="scientific">Sus scrofa</name>
    <name type="common">Pig</name>
    <dbReference type="NCBI Taxonomy" id="9823"/>
    <lineage>
        <taxon>Eukaryota</taxon>
        <taxon>Metazoa</taxon>
        <taxon>Chordata</taxon>
        <taxon>Craniata</taxon>
        <taxon>Vertebrata</taxon>
        <taxon>Euteleostomi</taxon>
        <taxon>Mammalia</taxon>
        <taxon>Eutheria</taxon>
        <taxon>Laurasiatheria</taxon>
        <taxon>Artiodactyla</taxon>
        <taxon>Suina</taxon>
        <taxon>Suidae</taxon>
        <taxon>Sus</taxon>
    </lineage>
</organism>
<dbReference type="EC" id="3.6.5.2" evidence="2"/>
<dbReference type="EMBL" id="DQ917633">
    <property type="protein sequence ID" value="ABI97178.1"/>
    <property type="molecule type" value="mRNA"/>
</dbReference>
<dbReference type="RefSeq" id="NP_001116657.1">
    <property type="nucleotide sequence ID" value="NM_001123185.1"/>
</dbReference>
<dbReference type="SMR" id="Q06AU2"/>
<dbReference type="FunCoup" id="Q06AU2">
    <property type="interactions" value="678"/>
</dbReference>
<dbReference type="STRING" id="9823.ENSSSCP00000058825"/>
<dbReference type="PaxDb" id="9823-ENSSSCP00000010152"/>
<dbReference type="PeptideAtlas" id="Q06AU2"/>
<dbReference type="Ensembl" id="ENSSSCT00000050005.2">
    <property type="protein sequence ID" value="ENSSSCP00000058825.1"/>
    <property type="gene ID" value="ENSSSCG00000038366.2"/>
</dbReference>
<dbReference type="Ensembl" id="ENSSSCT00015016671.1">
    <property type="protein sequence ID" value="ENSSSCP00015006491.1"/>
    <property type="gene ID" value="ENSSSCG00015012636.1"/>
</dbReference>
<dbReference type="Ensembl" id="ENSSSCT00025035653.1">
    <property type="protein sequence ID" value="ENSSSCP00025014877.1"/>
    <property type="gene ID" value="ENSSSCG00025026371.1"/>
</dbReference>
<dbReference type="Ensembl" id="ENSSSCT00030070947.1">
    <property type="protein sequence ID" value="ENSSSCP00030032366.1"/>
    <property type="gene ID" value="ENSSSCG00030050921.1"/>
</dbReference>
<dbReference type="Ensembl" id="ENSSSCT00035034891.1">
    <property type="protein sequence ID" value="ENSSSCP00035013825.1"/>
    <property type="gene ID" value="ENSSSCG00035026447.1"/>
</dbReference>
<dbReference type="Ensembl" id="ENSSSCT00040066343.1">
    <property type="protein sequence ID" value="ENSSSCP00040028118.1"/>
    <property type="gene ID" value="ENSSSCG00040049208.1"/>
</dbReference>
<dbReference type="Ensembl" id="ENSSSCT00045045201.1">
    <property type="protein sequence ID" value="ENSSSCP00045031350.1"/>
    <property type="gene ID" value="ENSSSCG00045026575.1"/>
</dbReference>
<dbReference type="Ensembl" id="ENSSSCT00050043540.1">
    <property type="protein sequence ID" value="ENSSSCP00050017972.1"/>
    <property type="gene ID" value="ENSSSCG00050032431.1"/>
</dbReference>
<dbReference type="Ensembl" id="ENSSSCT00055015095.1">
    <property type="protein sequence ID" value="ENSSSCP00055011871.1"/>
    <property type="gene ID" value="ENSSSCG00055007730.1"/>
</dbReference>
<dbReference type="Ensembl" id="ENSSSCT00060027417.1">
    <property type="protein sequence ID" value="ENSSSCP00060011693.1"/>
    <property type="gene ID" value="ENSSSCG00060020269.1"/>
</dbReference>
<dbReference type="Ensembl" id="ENSSSCT00065057828.1">
    <property type="protein sequence ID" value="ENSSSCP00065025105.1"/>
    <property type="gene ID" value="ENSSSCG00065042296.1"/>
</dbReference>
<dbReference type="Ensembl" id="ENSSSCT00070006762.1">
    <property type="protein sequence ID" value="ENSSSCP00070005516.1"/>
    <property type="gene ID" value="ENSSSCG00070003610.1"/>
</dbReference>
<dbReference type="Ensembl" id="ENSSSCT00085043810">
    <property type="protein sequence ID" value="ENSSSCP00085030680"/>
    <property type="gene ID" value="ENSSSCG00085022808"/>
</dbReference>
<dbReference type="Ensembl" id="ENSSSCT00090046423">
    <property type="protein sequence ID" value="ENSSSCP00090028755"/>
    <property type="gene ID" value="ENSSSCG00090026300"/>
</dbReference>
<dbReference type="Ensembl" id="ENSSSCT00105005945">
    <property type="protein sequence ID" value="ENSSSCP00105004368"/>
    <property type="gene ID" value="ENSSSCG00105003060"/>
</dbReference>
<dbReference type="Ensembl" id="ENSSSCT00110003436">
    <property type="protein sequence ID" value="ENSSSCP00110002713"/>
    <property type="gene ID" value="ENSSSCG00110001672"/>
</dbReference>
<dbReference type="Ensembl" id="ENSSSCT00115028310">
    <property type="protein sequence ID" value="ENSSSCP00115026849"/>
    <property type="gene ID" value="ENSSSCG00115016199"/>
</dbReference>
<dbReference type="Ensembl" id="ENSSSCT00130058022">
    <property type="protein sequence ID" value="ENSSSCP00130041606"/>
    <property type="gene ID" value="ENSSSCG00130029719"/>
</dbReference>
<dbReference type="GeneID" id="100144507"/>
<dbReference type="KEGG" id="ssc:100144507"/>
<dbReference type="CTD" id="5912"/>
<dbReference type="VGNC" id="VGNC:92089">
    <property type="gene designation" value="RAP2B"/>
</dbReference>
<dbReference type="eggNOG" id="KOG0395">
    <property type="taxonomic scope" value="Eukaryota"/>
</dbReference>
<dbReference type="GeneTree" id="ENSGT00940000160283"/>
<dbReference type="InParanoid" id="Q06AU2"/>
<dbReference type="OMA" id="QMNYSAV"/>
<dbReference type="OrthoDB" id="5976022at2759"/>
<dbReference type="Reactome" id="R-SSC-6798695">
    <property type="pathway name" value="Neutrophil degranulation"/>
</dbReference>
<dbReference type="Proteomes" id="UP000008227">
    <property type="component" value="Chromosome 13"/>
</dbReference>
<dbReference type="Proteomes" id="UP000314985">
    <property type="component" value="Chromosome 13"/>
</dbReference>
<dbReference type="Proteomes" id="UP000694570">
    <property type="component" value="Unplaced"/>
</dbReference>
<dbReference type="Proteomes" id="UP000694571">
    <property type="component" value="Unplaced"/>
</dbReference>
<dbReference type="Proteomes" id="UP000694720">
    <property type="component" value="Unplaced"/>
</dbReference>
<dbReference type="Proteomes" id="UP000694722">
    <property type="component" value="Unplaced"/>
</dbReference>
<dbReference type="Proteomes" id="UP000694723">
    <property type="component" value="Unplaced"/>
</dbReference>
<dbReference type="Proteomes" id="UP000694724">
    <property type="component" value="Unplaced"/>
</dbReference>
<dbReference type="Proteomes" id="UP000694725">
    <property type="component" value="Unplaced"/>
</dbReference>
<dbReference type="Proteomes" id="UP000694726">
    <property type="component" value="Unplaced"/>
</dbReference>
<dbReference type="Proteomes" id="UP000694727">
    <property type="component" value="Unplaced"/>
</dbReference>
<dbReference type="Proteomes" id="UP000694728">
    <property type="component" value="Unplaced"/>
</dbReference>
<dbReference type="Bgee" id="ENSSSCG00000038366">
    <property type="expression patterns" value="Expressed in granulosa cell and 42 other cell types or tissues"/>
</dbReference>
<dbReference type="GO" id="GO:0005923">
    <property type="term" value="C:bicellular tight junction"/>
    <property type="evidence" value="ECO:0007669"/>
    <property type="project" value="Ensembl"/>
</dbReference>
<dbReference type="GO" id="GO:0044291">
    <property type="term" value="C:cell-cell contact zone"/>
    <property type="evidence" value="ECO:0007669"/>
    <property type="project" value="Ensembl"/>
</dbReference>
<dbReference type="GO" id="GO:0005829">
    <property type="term" value="C:cytosol"/>
    <property type="evidence" value="ECO:0007669"/>
    <property type="project" value="Ensembl"/>
</dbReference>
<dbReference type="GO" id="GO:0070062">
    <property type="term" value="C:extracellular exosome"/>
    <property type="evidence" value="ECO:0007669"/>
    <property type="project" value="Ensembl"/>
</dbReference>
<dbReference type="GO" id="GO:0045121">
    <property type="term" value="C:membrane raft"/>
    <property type="evidence" value="ECO:0007669"/>
    <property type="project" value="Ensembl"/>
</dbReference>
<dbReference type="GO" id="GO:0030496">
    <property type="term" value="C:midbody"/>
    <property type="evidence" value="ECO:0007669"/>
    <property type="project" value="UniProtKB-SubCell"/>
</dbReference>
<dbReference type="GO" id="GO:0005886">
    <property type="term" value="C:plasma membrane"/>
    <property type="evidence" value="ECO:0000318"/>
    <property type="project" value="GO_Central"/>
</dbReference>
<dbReference type="GO" id="GO:0055038">
    <property type="term" value="C:recycling endosome membrane"/>
    <property type="evidence" value="ECO:0000250"/>
    <property type="project" value="UniProtKB"/>
</dbReference>
<dbReference type="GO" id="GO:0003925">
    <property type="term" value="F:G protein activity"/>
    <property type="evidence" value="ECO:0007669"/>
    <property type="project" value="UniProtKB-EC"/>
</dbReference>
<dbReference type="GO" id="GO:0019003">
    <property type="term" value="F:GDP binding"/>
    <property type="evidence" value="ECO:0000318"/>
    <property type="project" value="GO_Central"/>
</dbReference>
<dbReference type="GO" id="GO:0005525">
    <property type="term" value="F:GTP binding"/>
    <property type="evidence" value="ECO:0000318"/>
    <property type="project" value="GO_Central"/>
</dbReference>
<dbReference type="GO" id="GO:0003924">
    <property type="term" value="F:GTPase activity"/>
    <property type="evidence" value="ECO:0000250"/>
    <property type="project" value="UniProtKB"/>
</dbReference>
<dbReference type="GO" id="GO:0019904">
    <property type="term" value="F:protein domain specific binding"/>
    <property type="evidence" value="ECO:0007669"/>
    <property type="project" value="Ensembl"/>
</dbReference>
<dbReference type="GO" id="GO:0030036">
    <property type="term" value="P:actin cytoskeleton organization"/>
    <property type="evidence" value="ECO:0000250"/>
    <property type="project" value="UniProtKB"/>
</dbReference>
<dbReference type="GO" id="GO:0030336">
    <property type="term" value="P:negative regulation of cell migration"/>
    <property type="evidence" value="ECO:0000318"/>
    <property type="project" value="GO_Central"/>
</dbReference>
<dbReference type="GO" id="GO:0070527">
    <property type="term" value="P:platelet aggregation"/>
    <property type="evidence" value="ECO:0007669"/>
    <property type="project" value="Ensembl"/>
</dbReference>
<dbReference type="GO" id="GO:0031954">
    <property type="term" value="P:positive regulation of protein autophosphorylation"/>
    <property type="evidence" value="ECO:0000250"/>
    <property type="project" value="UniProtKB"/>
</dbReference>
<dbReference type="GO" id="GO:0008104">
    <property type="term" value="P:protein localization"/>
    <property type="evidence" value="ECO:0000250"/>
    <property type="project" value="UniProtKB"/>
</dbReference>
<dbReference type="GO" id="GO:0032486">
    <property type="term" value="P:Rap protein signal transduction"/>
    <property type="evidence" value="ECO:0000250"/>
    <property type="project" value="UniProtKB"/>
</dbReference>
<dbReference type="GO" id="GO:0048814">
    <property type="term" value="P:regulation of dendrite morphogenesis"/>
    <property type="evidence" value="ECO:0000250"/>
    <property type="project" value="UniProtKB"/>
</dbReference>
<dbReference type="GO" id="GO:0046328">
    <property type="term" value="P:regulation of JNK cascade"/>
    <property type="evidence" value="ECO:0000250"/>
    <property type="project" value="UniProtKB"/>
</dbReference>
<dbReference type="CDD" id="cd04176">
    <property type="entry name" value="Rap2"/>
    <property type="match status" value="1"/>
</dbReference>
<dbReference type="FunFam" id="3.40.50.300:FF:001686">
    <property type="entry name" value="KRAS proto-oncogene, GTPase"/>
    <property type="match status" value="1"/>
</dbReference>
<dbReference type="FunFam" id="3.40.50.300:FF:002735">
    <property type="entry name" value="ras-related protein Rap-2b isoform X3"/>
    <property type="match status" value="1"/>
</dbReference>
<dbReference type="Gene3D" id="3.40.50.300">
    <property type="entry name" value="P-loop containing nucleotide triphosphate hydrolases"/>
    <property type="match status" value="1"/>
</dbReference>
<dbReference type="InterPro" id="IPR027417">
    <property type="entry name" value="P-loop_NTPase"/>
</dbReference>
<dbReference type="InterPro" id="IPR041840">
    <property type="entry name" value="Rap2"/>
</dbReference>
<dbReference type="InterPro" id="IPR005225">
    <property type="entry name" value="Small_GTP-bd"/>
</dbReference>
<dbReference type="InterPro" id="IPR001806">
    <property type="entry name" value="Small_GTPase"/>
</dbReference>
<dbReference type="InterPro" id="IPR020849">
    <property type="entry name" value="Small_GTPase_Ras-type"/>
</dbReference>
<dbReference type="NCBIfam" id="TIGR00231">
    <property type="entry name" value="small_GTP"/>
    <property type="match status" value="1"/>
</dbReference>
<dbReference type="PANTHER" id="PTHR24070">
    <property type="entry name" value="RAS, DI-RAS, AND RHEB FAMILY MEMBERS OF SMALL GTPASE SUPERFAMILY"/>
    <property type="match status" value="1"/>
</dbReference>
<dbReference type="Pfam" id="PF00071">
    <property type="entry name" value="Ras"/>
    <property type="match status" value="1"/>
</dbReference>
<dbReference type="PRINTS" id="PR00449">
    <property type="entry name" value="RASTRNSFRMNG"/>
</dbReference>
<dbReference type="SMART" id="SM00175">
    <property type="entry name" value="RAB"/>
    <property type="match status" value="1"/>
</dbReference>
<dbReference type="SMART" id="SM00173">
    <property type="entry name" value="RAS"/>
    <property type="match status" value="1"/>
</dbReference>
<dbReference type="SMART" id="SM00174">
    <property type="entry name" value="RHO"/>
    <property type="match status" value="1"/>
</dbReference>
<dbReference type="SUPFAM" id="SSF52540">
    <property type="entry name" value="P-loop containing nucleoside triphosphate hydrolases"/>
    <property type="match status" value="1"/>
</dbReference>
<dbReference type="PROSITE" id="PS51421">
    <property type="entry name" value="RAS"/>
    <property type="match status" value="1"/>
</dbReference>
<gene>
    <name type="primary">RAP2A</name>
</gene>
<accession>Q06AU2</accession>
<comment type="function">
    <text evidence="2">Small GTP-binding protein which cycles between a GDP-bound inactive and a GTP-bound active form. In its active form interacts with and regulates several effectors including MAP4K4, MINK1 and TNIK. Part of a signaling complex composed of NEDD4, RAP2A and TNIK which regulates neuronal dendrite extension and arborization during development. More generally, it is part of several signaling cascades and may regulate cytoskeletal rearrangements, cell migration, cell adhesion and cell spreading (By similarity).</text>
</comment>
<comment type="catalytic activity">
    <reaction evidence="2">
        <text>GTP + H2O = GDP + phosphate + H(+)</text>
        <dbReference type="Rhea" id="RHEA:19669"/>
        <dbReference type="ChEBI" id="CHEBI:15377"/>
        <dbReference type="ChEBI" id="CHEBI:15378"/>
        <dbReference type="ChEBI" id="CHEBI:37565"/>
        <dbReference type="ChEBI" id="CHEBI:43474"/>
        <dbReference type="ChEBI" id="CHEBI:58189"/>
        <dbReference type="EC" id="3.6.5.2"/>
    </reaction>
</comment>
<comment type="activity regulation">
    <text evidence="2">Activated by the guanine nucleotide-exchange factors RAPGEF3 and RAPGEF4 in a cAMP-dependent manner. Nucleotide exchange is also specifically stimulated by RAPGEF5, RASGEF1A and RASGEF1B (By similarity).</text>
</comment>
<comment type="subunit">
    <text evidence="2 3">Interacts (GTP-bound form) with RUNDC3A. Interacts with PLCE1. Interacts with ARHGAP29, SGSM1, SGSM2 and SGSM3. Interacts (GTP-bound form preferentially) with TNIK (via the CNH domain); the interaction is direct and recruits RAP2A to the E3 ubiquitin ligase NEDD4. Interacts with MINK1. Interacts (GTP-bound form preferentially) with MAP4K4. Interacts with cytoskeletal actin. Interacts with RGS14; the interaction is GTP-dependent (By similarity).</text>
</comment>
<comment type="subcellular location">
    <subcellularLocation>
        <location evidence="2">Midbody</location>
    </subcellularLocation>
    <subcellularLocation>
        <location evidence="2">Cell projection</location>
        <location evidence="2">Lamellipodium membrane</location>
    </subcellularLocation>
    <subcellularLocation>
        <location evidence="2">Golgi apparatus</location>
    </subcellularLocation>
    <subcellularLocation>
        <location evidence="2">Recycling endosome membrane</location>
        <topology evidence="3">Lipid-anchor</topology>
        <orientation evidence="3">Cytoplasmic side</orientation>
    </subcellularLocation>
    <subcellularLocation>
        <location evidence="2">Lysosome</location>
    </subcellularLocation>
    <text evidence="2">Localized to the Golgi. May also localize to the gelatinase-containing granules of neutrophils. Colocalized with RASGEF1B to midbody at telophase. Localized predominantly to the plasma membrane, where it is enriched at lamellipodia ruffles. Cycles between the lamellipodia plasma membrane and endosomes when ubiquitinated by the ECS(RAB40B) complex. Without the ubiquitin signal, sorted to lysosomes for degradation.</text>
</comment>
<comment type="domain">
    <text evidence="1">The effector domain mediates the interaction with RUNDC3A.</text>
</comment>
<comment type="PTM">
    <text evidence="2">Ubiquitinated; undergoes 'Lys-63' monoubiquitination and diubiquitination by NEDD4. Multiple lysine residues are probably modified. Ubiquitination requires TNIK, prevents interaction with effectors and inactivates RAP2A. Ubiquitination by the ECS(RAB40B) complex leads to RAP2A localization to lamellipodia plasma membrane, activation, and regulation of sorting at early endosomes for recycling to the lamellipodia plasma membrane.</text>
</comment>
<comment type="PTM">
    <text evidence="3">Palmitoylated. Palmitoylation is required for association with recycling endosome membranes and activation of TNIK.</text>
</comment>
<comment type="similarity">
    <text evidence="4">Belongs to the small GTPase superfamily. Ras family.</text>
</comment>
<keyword id="KW-1003">Cell membrane</keyword>
<keyword id="KW-0966">Cell projection</keyword>
<keyword id="KW-0967">Endosome</keyword>
<keyword id="KW-0333">Golgi apparatus</keyword>
<keyword id="KW-0342">GTP-binding</keyword>
<keyword id="KW-0378">Hydrolase</keyword>
<keyword id="KW-0449">Lipoprotein</keyword>
<keyword id="KW-0458">Lysosome</keyword>
<keyword id="KW-0472">Membrane</keyword>
<keyword id="KW-0488">Methylation</keyword>
<keyword id="KW-0547">Nucleotide-binding</keyword>
<keyword id="KW-0564">Palmitate</keyword>
<keyword id="KW-0636">Prenylation</keyword>
<keyword id="KW-1185">Reference proteome</keyword>
<keyword id="KW-0832">Ubl conjugation</keyword>
<evidence type="ECO:0000250" key="1"/>
<evidence type="ECO:0000250" key="2">
    <source>
        <dbReference type="UniProtKB" id="P10114"/>
    </source>
</evidence>
<evidence type="ECO:0000250" key="3">
    <source>
        <dbReference type="UniProtKB" id="Q80ZJ1"/>
    </source>
</evidence>
<evidence type="ECO:0000305" key="4"/>